<evidence type="ECO:0000255" key="1">
    <source>
        <dbReference type="HAMAP-Rule" id="MF_01635"/>
    </source>
</evidence>
<sequence>MLARFPLYLRLIRMDKPIGSLLLLWPTLNALWIASDGHPAPSLVAIFALGTLLMRSAGCAINDYADRDFDRHVKRTAERPLTSGKIRAWEAIAIAVGLALVSFLLILPLNGLTKELSVVAVFVAATYPFMKRFFAIPQAYLGIAFGFGIPMAFAAVQDTVPMIAWAMLAANVFWSVAYDTAYAMVDRDDDLKIGMRTSAITFGRHDVLAIMLCYAAMLGIYVWLGAALHFGWPYWAGWAAAAGCSIYHYTLIKDRERMACFAAFRHNNWLGGVLFAGIAAHYALAVR</sequence>
<dbReference type="EC" id="2.5.1.39" evidence="1"/>
<dbReference type="EMBL" id="CP000572">
    <property type="protein sequence ID" value="ABN89750.1"/>
    <property type="molecule type" value="Genomic_DNA"/>
</dbReference>
<dbReference type="RefSeq" id="WP_004522125.1">
    <property type="nucleotide sequence ID" value="NC_009076.1"/>
</dbReference>
<dbReference type="SMR" id="A3NZ16"/>
<dbReference type="KEGG" id="bpl:BURPS1106A_3350"/>
<dbReference type="HOGENOM" id="CLU_034879_1_0_4"/>
<dbReference type="UniPathway" id="UPA00232"/>
<dbReference type="Proteomes" id="UP000006738">
    <property type="component" value="Chromosome I"/>
</dbReference>
<dbReference type="GO" id="GO:0005886">
    <property type="term" value="C:plasma membrane"/>
    <property type="evidence" value="ECO:0007669"/>
    <property type="project" value="UniProtKB-SubCell"/>
</dbReference>
<dbReference type="GO" id="GO:0008412">
    <property type="term" value="F:4-hydroxybenzoate polyprenyltransferase activity"/>
    <property type="evidence" value="ECO:0007669"/>
    <property type="project" value="UniProtKB-UniRule"/>
</dbReference>
<dbReference type="GO" id="GO:0006744">
    <property type="term" value="P:ubiquinone biosynthetic process"/>
    <property type="evidence" value="ECO:0007669"/>
    <property type="project" value="UniProtKB-UniRule"/>
</dbReference>
<dbReference type="CDD" id="cd13959">
    <property type="entry name" value="PT_UbiA_COQ2"/>
    <property type="match status" value="1"/>
</dbReference>
<dbReference type="FunFam" id="1.10.357.140:FF:000002">
    <property type="entry name" value="4-hydroxybenzoate octaprenyltransferase"/>
    <property type="match status" value="1"/>
</dbReference>
<dbReference type="FunFam" id="1.20.120.1780:FF:000001">
    <property type="entry name" value="4-hydroxybenzoate octaprenyltransferase"/>
    <property type="match status" value="1"/>
</dbReference>
<dbReference type="Gene3D" id="1.10.357.140">
    <property type="entry name" value="UbiA prenyltransferase"/>
    <property type="match status" value="1"/>
</dbReference>
<dbReference type="Gene3D" id="1.20.120.1780">
    <property type="entry name" value="UbiA prenyltransferase"/>
    <property type="match status" value="1"/>
</dbReference>
<dbReference type="HAMAP" id="MF_01635">
    <property type="entry name" value="UbiA"/>
    <property type="match status" value="1"/>
</dbReference>
<dbReference type="InterPro" id="IPR006370">
    <property type="entry name" value="HB_polyprenyltransferase-like"/>
</dbReference>
<dbReference type="InterPro" id="IPR039653">
    <property type="entry name" value="Prenyltransferase"/>
</dbReference>
<dbReference type="InterPro" id="IPR000537">
    <property type="entry name" value="UbiA_prenyltransferase"/>
</dbReference>
<dbReference type="InterPro" id="IPR030470">
    <property type="entry name" value="UbiA_prenylTrfase_CS"/>
</dbReference>
<dbReference type="InterPro" id="IPR044878">
    <property type="entry name" value="UbiA_sf"/>
</dbReference>
<dbReference type="NCBIfam" id="TIGR01474">
    <property type="entry name" value="ubiA_proteo"/>
    <property type="match status" value="1"/>
</dbReference>
<dbReference type="PANTHER" id="PTHR11048:SF28">
    <property type="entry name" value="4-HYDROXYBENZOATE POLYPRENYLTRANSFERASE, MITOCHONDRIAL"/>
    <property type="match status" value="1"/>
</dbReference>
<dbReference type="PANTHER" id="PTHR11048">
    <property type="entry name" value="PRENYLTRANSFERASES"/>
    <property type="match status" value="1"/>
</dbReference>
<dbReference type="Pfam" id="PF01040">
    <property type="entry name" value="UbiA"/>
    <property type="match status" value="1"/>
</dbReference>
<dbReference type="PROSITE" id="PS00943">
    <property type="entry name" value="UBIA"/>
    <property type="match status" value="1"/>
</dbReference>
<feature type="chain" id="PRO_1000069811" description="4-hydroxybenzoate octaprenyltransferase">
    <location>
        <begin position="1"/>
        <end position="287"/>
    </location>
</feature>
<feature type="transmembrane region" description="Helical" evidence="1">
    <location>
        <begin position="30"/>
        <end position="50"/>
    </location>
</feature>
<feature type="transmembrane region" description="Helical" evidence="1">
    <location>
        <begin position="92"/>
        <end position="112"/>
    </location>
</feature>
<feature type="transmembrane region" description="Helical" evidence="1">
    <location>
        <begin position="133"/>
        <end position="153"/>
    </location>
</feature>
<feature type="transmembrane region" description="Helical" evidence="1">
    <location>
        <begin position="158"/>
        <end position="178"/>
    </location>
</feature>
<feature type="transmembrane region" description="Helical" evidence="1">
    <location>
        <begin position="207"/>
        <end position="227"/>
    </location>
</feature>
<feature type="transmembrane region" description="Helical" evidence="1">
    <location>
        <begin position="232"/>
        <end position="252"/>
    </location>
</feature>
<feature type="transmembrane region" description="Helical" evidence="1">
    <location>
        <begin position="266"/>
        <end position="286"/>
    </location>
</feature>
<comment type="function">
    <text evidence="1">Catalyzes the prenylation of para-hydroxybenzoate (PHB) with an all-trans polyprenyl group. Mediates the second step in the final reaction sequence of ubiquinone-8 (UQ-8) biosynthesis, which is the condensation of the polyisoprenoid side chain with PHB, generating the first membrane-bound Q intermediate 3-octaprenyl-4-hydroxybenzoate.</text>
</comment>
<comment type="catalytic activity">
    <reaction evidence="1">
        <text>all-trans-octaprenyl diphosphate + 4-hydroxybenzoate = 4-hydroxy-3-(all-trans-octaprenyl)benzoate + diphosphate</text>
        <dbReference type="Rhea" id="RHEA:27782"/>
        <dbReference type="ChEBI" id="CHEBI:1617"/>
        <dbReference type="ChEBI" id="CHEBI:17879"/>
        <dbReference type="ChEBI" id="CHEBI:33019"/>
        <dbReference type="ChEBI" id="CHEBI:57711"/>
        <dbReference type="EC" id="2.5.1.39"/>
    </reaction>
</comment>
<comment type="cofactor">
    <cofactor evidence="1">
        <name>Mg(2+)</name>
        <dbReference type="ChEBI" id="CHEBI:18420"/>
    </cofactor>
</comment>
<comment type="pathway">
    <text evidence="1">Cofactor biosynthesis; ubiquinone biosynthesis.</text>
</comment>
<comment type="subcellular location">
    <subcellularLocation>
        <location evidence="1">Cell inner membrane</location>
        <topology evidence="1">Multi-pass membrane protein</topology>
    </subcellularLocation>
</comment>
<comment type="similarity">
    <text evidence="1">Belongs to the UbiA prenyltransferase family.</text>
</comment>
<gene>
    <name evidence="1" type="primary">ubiA</name>
    <name type="ordered locus">BURPS1106A_3350</name>
</gene>
<proteinExistence type="inferred from homology"/>
<accession>A3NZ16</accession>
<name>UBIA_BURP0</name>
<reference key="1">
    <citation type="journal article" date="2010" name="Genome Biol. Evol.">
        <title>Continuing evolution of Burkholderia mallei through genome reduction and large-scale rearrangements.</title>
        <authorList>
            <person name="Losada L."/>
            <person name="Ronning C.M."/>
            <person name="DeShazer D."/>
            <person name="Woods D."/>
            <person name="Fedorova N."/>
            <person name="Kim H.S."/>
            <person name="Shabalina S.A."/>
            <person name="Pearson T.R."/>
            <person name="Brinkac L."/>
            <person name="Tan P."/>
            <person name="Nandi T."/>
            <person name="Crabtree J."/>
            <person name="Badger J."/>
            <person name="Beckstrom-Sternberg S."/>
            <person name="Saqib M."/>
            <person name="Schutzer S.E."/>
            <person name="Keim P."/>
            <person name="Nierman W.C."/>
        </authorList>
    </citation>
    <scope>NUCLEOTIDE SEQUENCE [LARGE SCALE GENOMIC DNA]</scope>
    <source>
        <strain>1106a</strain>
    </source>
</reference>
<protein>
    <recommendedName>
        <fullName evidence="1">4-hydroxybenzoate octaprenyltransferase</fullName>
        <ecNumber evidence="1">2.5.1.39</ecNumber>
    </recommendedName>
    <alternativeName>
        <fullName evidence="1">4-HB polyprenyltransferase</fullName>
    </alternativeName>
</protein>
<keyword id="KW-0997">Cell inner membrane</keyword>
<keyword id="KW-1003">Cell membrane</keyword>
<keyword id="KW-0460">Magnesium</keyword>
<keyword id="KW-0472">Membrane</keyword>
<keyword id="KW-0808">Transferase</keyword>
<keyword id="KW-0812">Transmembrane</keyword>
<keyword id="KW-1133">Transmembrane helix</keyword>
<keyword id="KW-0831">Ubiquinone biosynthesis</keyword>
<organism>
    <name type="scientific">Burkholderia pseudomallei (strain 1106a)</name>
    <dbReference type="NCBI Taxonomy" id="357348"/>
    <lineage>
        <taxon>Bacteria</taxon>
        <taxon>Pseudomonadati</taxon>
        <taxon>Pseudomonadota</taxon>
        <taxon>Betaproteobacteria</taxon>
        <taxon>Burkholderiales</taxon>
        <taxon>Burkholderiaceae</taxon>
        <taxon>Burkholderia</taxon>
        <taxon>pseudomallei group</taxon>
    </lineage>
</organism>